<organism>
    <name type="scientific">Peptoclostridium acidaminophilum</name>
    <name type="common">Eubacterium acidaminophilum</name>
    <dbReference type="NCBI Taxonomy" id="1731"/>
    <lineage>
        <taxon>Bacteria</taxon>
        <taxon>Bacillati</taxon>
        <taxon>Bacillota</taxon>
        <taxon>Clostridia</taxon>
        <taxon>Peptostreptococcales</taxon>
        <taxon>Peptoclostridiaceae</taxon>
        <taxon>Peptoclostridium</taxon>
    </lineage>
</organism>
<reference key="1">
    <citation type="journal article" date="2000" name="Arch. Microbiol.">
        <title>A selDABC cluster for selenocysteine incorporation in Eubacterium acidaminophilum.</title>
        <authorList>
            <person name="Gursinsky T."/>
            <person name="Jaeger J."/>
            <person name="Andreesen J.R."/>
            <person name="Soehling B."/>
        </authorList>
    </citation>
    <scope>NUCLEOTIDE SEQUENCE [GENOMIC DNA]</scope>
    <source>
        <strain>ATCC 49065 / DSM 3953 / al-2</strain>
    </source>
</reference>
<name>SELD2_PEPAC</name>
<accession>Q9L4E1</accession>
<proteinExistence type="inferred from homology"/>
<protein>
    <recommendedName>
        <fullName evidence="1">Selenide, water dikinase 2</fullName>
        <ecNumber evidence="1">2.7.9.3</ecNumber>
    </recommendedName>
    <alternativeName>
        <fullName evidence="1">Selenium donor protein 2</fullName>
    </alternativeName>
    <alternativeName>
        <fullName evidence="1">Selenophosphate synthase 2</fullName>
    </alternativeName>
</protein>
<keyword id="KW-0067">ATP-binding</keyword>
<keyword id="KW-0418">Kinase</keyword>
<keyword id="KW-0460">Magnesium</keyword>
<keyword id="KW-0479">Metal-binding</keyword>
<keyword id="KW-0547">Nucleotide-binding</keyword>
<keyword id="KW-0711">Selenium</keyword>
<keyword id="KW-0712">Selenocysteine</keyword>
<keyword id="KW-0808">Transferase</keyword>
<feature type="chain" id="PRO_0000127623" description="Selenide, water dikinase 2">
    <location>
        <begin position="1"/>
        <end position="347"/>
    </location>
</feature>
<feature type="active site" evidence="1">
    <location>
        <position position="18"/>
    </location>
</feature>
<feature type="binding site" description="in other chain" evidence="1">
    <location>
        <position position="21"/>
    </location>
    <ligand>
        <name>ATP</name>
        <dbReference type="ChEBI" id="CHEBI:30616"/>
        <note>ligand shared between dimeric partners</note>
    </ligand>
</feature>
<feature type="binding site" description="in other chain" evidence="1">
    <location>
        <begin position="48"/>
        <end position="50"/>
    </location>
    <ligand>
        <name>ATP</name>
        <dbReference type="ChEBI" id="CHEBI:30616"/>
        <note>ligand shared between dimeric partners</note>
    </ligand>
</feature>
<feature type="binding site" evidence="1">
    <location>
        <position position="51"/>
    </location>
    <ligand>
        <name>Mg(2+)</name>
        <dbReference type="ChEBI" id="CHEBI:18420"/>
    </ligand>
</feature>
<feature type="binding site" description="in other chain" evidence="1">
    <location>
        <position position="68"/>
    </location>
    <ligand>
        <name>ATP</name>
        <dbReference type="ChEBI" id="CHEBI:30616"/>
        <note>ligand shared between dimeric partners</note>
    </ligand>
</feature>
<feature type="binding site" description="in other chain" evidence="1">
    <location>
        <position position="91"/>
    </location>
    <ligand>
        <name>ATP</name>
        <dbReference type="ChEBI" id="CHEBI:30616"/>
        <note>ligand shared between dimeric partners</note>
    </ligand>
</feature>
<feature type="binding site" evidence="1">
    <location>
        <position position="91"/>
    </location>
    <ligand>
        <name>Mg(2+)</name>
        <dbReference type="ChEBI" id="CHEBI:18420"/>
    </ligand>
</feature>
<feature type="binding site" evidence="1">
    <location>
        <begin position="138"/>
        <end position="140"/>
    </location>
    <ligand>
        <name>ATP</name>
        <dbReference type="ChEBI" id="CHEBI:30616"/>
        <note>ligand shared between dimeric partners</note>
    </ligand>
</feature>
<feature type="binding site" evidence="1">
    <location>
        <position position="226"/>
    </location>
    <ligand>
        <name>Mg(2+)</name>
        <dbReference type="ChEBI" id="CHEBI:18420"/>
    </ligand>
</feature>
<feature type="site" description="Important for catalytic activity" evidence="1">
    <location>
        <position position="21"/>
    </location>
</feature>
<feature type="non-standard amino acid" description="Selenocysteine">
    <location>
        <position position="18"/>
    </location>
</feature>
<dbReference type="EC" id="2.7.9.3" evidence="1"/>
<dbReference type="EMBL" id="AJ245960">
    <property type="protein sequence ID" value="CAB53233.1"/>
    <property type="molecule type" value="Genomic_DNA"/>
</dbReference>
<dbReference type="GO" id="GO:0005737">
    <property type="term" value="C:cytoplasm"/>
    <property type="evidence" value="ECO:0007669"/>
    <property type="project" value="TreeGrafter"/>
</dbReference>
<dbReference type="GO" id="GO:0005524">
    <property type="term" value="F:ATP binding"/>
    <property type="evidence" value="ECO:0007669"/>
    <property type="project" value="UniProtKB-UniRule"/>
</dbReference>
<dbReference type="GO" id="GO:0000287">
    <property type="term" value="F:magnesium ion binding"/>
    <property type="evidence" value="ECO:0007669"/>
    <property type="project" value="UniProtKB-UniRule"/>
</dbReference>
<dbReference type="GO" id="GO:0004756">
    <property type="term" value="F:selenide, water dikinase activity"/>
    <property type="evidence" value="ECO:0007669"/>
    <property type="project" value="UniProtKB-UniRule"/>
</dbReference>
<dbReference type="GO" id="GO:0016260">
    <property type="term" value="P:selenocysteine biosynthetic process"/>
    <property type="evidence" value="ECO:0007669"/>
    <property type="project" value="InterPro"/>
</dbReference>
<dbReference type="CDD" id="cd02195">
    <property type="entry name" value="SelD"/>
    <property type="match status" value="1"/>
</dbReference>
<dbReference type="FunFam" id="3.30.1330.10:FF:000003">
    <property type="entry name" value="Selenide, water dikinase"/>
    <property type="match status" value="1"/>
</dbReference>
<dbReference type="Gene3D" id="3.90.650.10">
    <property type="entry name" value="PurM-like C-terminal domain"/>
    <property type="match status" value="1"/>
</dbReference>
<dbReference type="Gene3D" id="3.30.1330.10">
    <property type="entry name" value="PurM-like, N-terminal domain"/>
    <property type="match status" value="1"/>
</dbReference>
<dbReference type="HAMAP" id="MF_00625">
    <property type="entry name" value="SelD"/>
    <property type="match status" value="1"/>
</dbReference>
<dbReference type="InterPro" id="IPR010918">
    <property type="entry name" value="PurM-like_C_dom"/>
</dbReference>
<dbReference type="InterPro" id="IPR036676">
    <property type="entry name" value="PurM-like_C_sf"/>
</dbReference>
<dbReference type="InterPro" id="IPR016188">
    <property type="entry name" value="PurM-like_N"/>
</dbReference>
<dbReference type="InterPro" id="IPR036921">
    <property type="entry name" value="PurM-like_N_sf"/>
</dbReference>
<dbReference type="InterPro" id="IPR023061">
    <property type="entry name" value="SelD_I"/>
</dbReference>
<dbReference type="InterPro" id="IPR004536">
    <property type="entry name" value="SPS/SelD"/>
</dbReference>
<dbReference type="NCBIfam" id="NF002098">
    <property type="entry name" value="PRK00943.1"/>
    <property type="match status" value="1"/>
</dbReference>
<dbReference type="NCBIfam" id="TIGR00476">
    <property type="entry name" value="selD"/>
    <property type="match status" value="1"/>
</dbReference>
<dbReference type="PANTHER" id="PTHR10256:SF0">
    <property type="entry name" value="INACTIVE SELENIDE, WATER DIKINASE-LIKE PROTEIN-RELATED"/>
    <property type="match status" value="1"/>
</dbReference>
<dbReference type="PANTHER" id="PTHR10256">
    <property type="entry name" value="SELENIDE, WATER DIKINASE"/>
    <property type="match status" value="1"/>
</dbReference>
<dbReference type="Pfam" id="PF00586">
    <property type="entry name" value="AIRS"/>
    <property type="match status" value="1"/>
</dbReference>
<dbReference type="Pfam" id="PF02769">
    <property type="entry name" value="AIRS_C"/>
    <property type="match status" value="1"/>
</dbReference>
<dbReference type="PIRSF" id="PIRSF036407">
    <property type="entry name" value="Selenphspht_syn"/>
    <property type="match status" value="1"/>
</dbReference>
<dbReference type="SUPFAM" id="SSF56042">
    <property type="entry name" value="PurM C-terminal domain-like"/>
    <property type="match status" value="1"/>
</dbReference>
<dbReference type="SUPFAM" id="SSF55326">
    <property type="entry name" value="PurM N-terminal domain-like"/>
    <property type="match status" value="1"/>
</dbReference>
<sequence>MKGSKEIKLTQMVTASGUAAKIGPEDLAKALVGLPKMFDERLLVGFDTSDDAAVYRLDDDKALIQTLDFFTPMVDDPYLFGQIAASNSLSDVYAMVGKPIVAMNIVCFPSCHDMSILGEILKGGADKVIESGAILVGGHTVDDKEPKYGLSVAGLVHPDKVLANSGARPGDALILTKPIGTGIVSTGMKAAMVQKSTEDEVVKIMAHLNKYAAEALDGFNVNSVTDITGFGFLGHAAEMAKGSGVTLEISSKDIPIMSEAEELAKMGIIPAGMYRNKKFIQSDVLCEGVSEHIMDILYDPQTSGGLLVSVPQEHARALADKMTSCGSLAAKIVGRVLSKEEKSIIVI</sequence>
<gene>
    <name evidence="1" type="primary">selD2</name>
    <name type="synonym">selD1</name>
</gene>
<comment type="function">
    <text evidence="1">Synthesizes selenophosphate from selenide and ATP.</text>
</comment>
<comment type="catalytic activity">
    <reaction evidence="1">
        <text>hydrogenselenide + ATP + H2O = selenophosphate + AMP + phosphate + 2 H(+)</text>
        <dbReference type="Rhea" id="RHEA:18737"/>
        <dbReference type="ChEBI" id="CHEBI:15377"/>
        <dbReference type="ChEBI" id="CHEBI:15378"/>
        <dbReference type="ChEBI" id="CHEBI:16144"/>
        <dbReference type="ChEBI" id="CHEBI:29317"/>
        <dbReference type="ChEBI" id="CHEBI:30616"/>
        <dbReference type="ChEBI" id="CHEBI:43474"/>
        <dbReference type="ChEBI" id="CHEBI:456215"/>
        <dbReference type="EC" id="2.7.9.3"/>
    </reaction>
</comment>
<comment type="cofactor">
    <cofactor evidence="1">
        <name>Mg(2+)</name>
        <dbReference type="ChEBI" id="CHEBI:18420"/>
    </cofactor>
    <text evidence="1">Binds 1 Mg(2+) ion per monomer.</text>
</comment>
<comment type="subunit">
    <text evidence="1">Homodimer.</text>
</comment>
<comment type="similarity">
    <text evidence="1 2">Belongs to the selenophosphate synthase 1 family. Class I subfamily.</text>
</comment>
<evidence type="ECO:0000255" key="1">
    <source>
        <dbReference type="HAMAP-Rule" id="MF_00625"/>
    </source>
</evidence>
<evidence type="ECO:0000305" key="2"/>